<comment type="similarity">
    <text evidence="1">Belongs to the orbivirus non-structural protein NS1 family.</text>
</comment>
<dbReference type="EMBL" id="U73658">
    <property type="protein sequence ID" value="AAC57898.1"/>
    <property type="molecule type" value="mRNA"/>
</dbReference>
<dbReference type="RefSeq" id="YP_052965.1">
    <property type="nucleotide sequence ID" value="NC_006020.1"/>
</dbReference>
<dbReference type="SMR" id="P87505"/>
<dbReference type="KEGG" id="vg:2943146"/>
<dbReference type="Proteomes" id="UP000201896">
    <property type="component" value="Genome"/>
</dbReference>
<dbReference type="InterPro" id="IPR002630">
    <property type="entry name" value="Orbi_NS1"/>
</dbReference>
<dbReference type="Pfam" id="PF01718">
    <property type="entry name" value="Orbi_NS1"/>
    <property type="match status" value="1"/>
</dbReference>
<protein>
    <recommendedName>
        <fullName>Non-structural protein NS1</fullName>
    </recommendedName>
</protein>
<accession>P87505</accession>
<reference key="1">
    <citation type="journal article" date="1997" name="J. Gen. Virol.">
        <title>Characterization of tubular structures composed of nonstructural protein NS1 of African horsesickness virus expressed in insect cells.</title>
        <authorList>
            <person name="Maree F.F."/>
            <person name="Huismans H."/>
        </authorList>
    </citation>
    <scope>NUCLEOTIDE SEQUENCE [MRNA]</scope>
    <source>
        <strain>Serotype 6</strain>
    </source>
</reference>
<organism>
    <name type="scientific">African horse sickness virus</name>
    <name type="common">AHSV</name>
    <name type="synonym">Orbivirus alphaequi</name>
    <dbReference type="NCBI Taxonomy" id="40050"/>
    <lineage>
        <taxon>Viruses</taxon>
        <taxon>Riboviria</taxon>
        <taxon>Orthornavirae</taxon>
        <taxon>Duplornaviricota</taxon>
        <taxon>Resentoviricetes</taxon>
        <taxon>Reovirales</taxon>
        <taxon>Sedoreoviridae</taxon>
        <taxon>Orbivirus</taxon>
    </lineage>
</organism>
<evidence type="ECO:0000305" key="1"/>
<sequence>MDRFLTYFQVRGERANAVRLFGEISEQIDCSHLKRDCFVNGICARQHFKECCNIATDNGSRTNADKLVALALRALLDRQTIWTCVIKNADYVSQYADEQMEEEVNKLYDVYLQSGTREEFEGFRQRNRPSRVVMDDSCSMLSYFYIPMNQGNPAPVAKLSRWGQFGICYYDRTNVDGLIPYDEIGLAQAIDGLKDLIEGRLPVCPYTGANGRINAVLHLPLEMEVIMAVQENATQLMRRAAQDFKFITHAGWRLYPRLLRQRFAIEDATEGVIHHVMLGHLRYYDEDTSIVKYRFLNDGSLDWRTWTIPLHLMRTARLGHLQPESILVFMHKSLHVRYALWLTSLCLTQSRWLIQKLPELTGGTDVLYTRAYVHADNHKVPNVRDLMMNEVFRKIDDHWVIQKCHTTKEAITVTAIQIQRSIRGDGQWDTPMFHQSMALLTRLIVYWLTDVTERSAIFRLTCFAIFGCKPTARGRYIDWDDLGTFMKNVLDGRDLTVLEDETCFISMMRMAMLHVQRSKVVCATVLEAPLEIQQVGQIVEVPFDFMHN</sequence>
<proteinExistence type="evidence at transcript level"/>
<gene>
    <name type="primary">Segment-5</name>
</gene>
<feature type="chain" id="PRO_0000222671" description="Non-structural protein NS1">
    <location>
        <begin position="1"/>
        <end position="548"/>
    </location>
</feature>
<name>VNS1_AHSV</name>